<dbReference type="EC" id="1.17.7.3" evidence="1"/>
<dbReference type="EMBL" id="CP000247">
    <property type="protein sequence ID" value="ABG70509.1"/>
    <property type="molecule type" value="Genomic_DNA"/>
</dbReference>
<dbReference type="RefSeq" id="WP_000551807.1">
    <property type="nucleotide sequence ID" value="NC_008253.1"/>
</dbReference>
<dbReference type="SMR" id="Q0TEX0"/>
<dbReference type="GeneID" id="86947404"/>
<dbReference type="KEGG" id="ecp:ECP_2520"/>
<dbReference type="HOGENOM" id="CLU_042258_0_0_6"/>
<dbReference type="UniPathway" id="UPA00056">
    <property type="reaction ID" value="UER00096"/>
</dbReference>
<dbReference type="Proteomes" id="UP000009182">
    <property type="component" value="Chromosome"/>
</dbReference>
<dbReference type="GO" id="GO:0051539">
    <property type="term" value="F:4 iron, 4 sulfur cluster binding"/>
    <property type="evidence" value="ECO:0007669"/>
    <property type="project" value="UniProtKB-UniRule"/>
</dbReference>
<dbReference type="GO" id="GO:0046429">
    <property type="term" value="F:4-hydroxy-3-methylbut-2-en-1-yl diphosphate synthase activity (ferredoxin)"/>
    <property type="evidence" value="ECO:0007669"/>
    <property type="project" value="UniProtKB-UniRule"/>
</dbReference>
<dbReference type="GO" id="GO:0141197">
    <property type="term" value="F:4-hydroxy-3-methylbut-2-enyl-diphosphate synthase activity (flavodoxin)"/>
    <property type="evidence" value="ECO:0007669"/>
    <property type="project" value="UniProtKB-EC"/>
</dbReference>
<dbReference type="GO" id="GO:0005506">
    <property type="term" value="F:iron ion binding"/>
    <property type="evidence" value="ECO:0007669"/>
    <property type="project" value="InterPro"/>
</dbReference>
<dbReference type="GO" id="GO:0019288">
    <property type="term" value="P:isopentenyl diphosphate biosynthetic process, methylerythritol 4-phosphate pathway"/>
    <property type="evidence" value="ECO:0007669"/>
    <property type="project" value="UniProtKB-UniRule"/>
</dbReference>
<dbReference type="GO" id="GO:0016114">
    <property type="term" value="P:terpenoid biosynthetic process"/>
    <property type="evidence" value="ECO:0007669"/>
    <property type="project" value="InterPro"/>
</dbReference>
<dbReference type="FunFam" id="3.20.20.20:FF:000001">
    <property type="entry name" value="4-hydroxy-3-methylbut-2-en-1-yl diphosphate synthase (flavodoxin)"/>
    <property type="match status" value="1"/>
</dbReference>
<dbReference type="FunFam" id="3.30.413.10:FF:000002">
    <property type="entry name" value="4-hydroxy-3-methylbut-2-en-1-yl diphosphate synthase (flavodoxin)"/>
    <property type="match status" value="1"/>
</dbReference>
<dbReference type="Gene3D" id="3.20.20.20">
    <property type="entry name" value="Dihydropteroate synthase-like"/>
    <property type="match status" value="1"/>
</dbReference>
<dbReference type="Gene3D" id="3.30.413.10">
    <property type="entry name" value="Sulfite Reductase Hemoprotein, domain 1"/>
    <property type="match status" value="1"/>
</dbReference>
<dbReference type="HAMAP" id="MF_00159">
    <property type="entry name" value="IspG"/>
    <property type="match status" value="1"/>
</dbReference>
<dbReference type="InterPro" id="IPR011005">
    <property type="entry name" value="Dihydropteroate_synth-like_sf"/>
</dbReference>
<dbReference type="InterPro" id="IPR016425">
    <property type="entry name" value="IspG_bac"/>
</dbReference>
<dbReference type="InterPro" id="IPR004588">
    <property type="entry name" value="IspG_bac-typ"/>
</dbReference>
<dbReference type="InterPro" id="IPR045854">
    <property type="entry name" value="NO2/SO3_Rdtase_4Fe4S_sf"/>
</dbReference>
<dbReference type="NCBIfam" id="TIGR00612">
    <property type="entry name" value="ispG_gcpE"/>
    <property type="match status" value="1"/>
</dbReference>
<dbReference type="NCBIfam" id="NF001540">
    <property type="entry name" value="PRK00366.1"/>
    <property type="match status" value="1"/>
</dbReference>
<dbReference type="PANTHER" id="PTHR30454">
    <property type="entry name" value="4-HYDROXY-3-METHYLBUT-2-EN-1-YL DIPHOSPHATE SYNTHASE"/>
    <property type="match status" value="1"/>
</dbReference>
<dbReference type="PANTHER" id="PTHR30454:SF0">
    <property type="entry name" value="4-HYDROXY-3-METHYLBUT-2-EN-1-YL DIPHOSPHATE SYNTHASE (FERREDOXIN), CHLOROPLASTIC"/>
    <property type="match status" value="1"/>
</dbReference>
<dbReference type="Pfam" id="PF04551">
    <property type="entry name" value="GcpE"/>
    <property type="match status" value="1"/>
</dbReference>
<dbReference type="PIRSF" id="PIRSF004640">
    <property type="entry name" value="IspG"/>
    <property type="match status" value="1"/>
</dbReference>
<dbReference type="SUPFAM" id="SSF51717">
    <property type="entry name" value="Dihydropteroate synthetase-like"/>
    <property type="match status" value="1"/>
</dbReference>
<dbReference type="SUPFAM" id="SSF56014">
    <property type="entry name" value="Nitrite and sulphite reductase 4Fe-4S domain-like"/>
    <property type="match status" value="1"/>
</dbReference>
<reference key="1">
    <citation type="journal article" date="2006" name="Mol. Microbiol.">
        <title>Role of pathogenicity island-associated integrases in the genome plasticity of uropathogenic Escherichia coli strain 536.</title>
        <authorList>
            <person name="Hochhut B."/>
            <person name="Wilde C."/>
            <person name="Balling G."/>
            <person name="Middendorf B."/>
            <person name="Dobrindt U."/>
            <person name="Brzuszkiewicz E."/>
            <person name="Gottschalk G."/>
            <person name="Carniel E."/>
            <person name="Hacker J."/>
        </authorList>
    </citation>
    <scope>NUCLEOTIDE SEQUENCE [LARGE SCALE GENOMIC DNA]</scope>
    <source>
        <strain>536 / UPEC</strain>
    </source>
</reference>
<name>ISPG_ECOL5</name>
<feature type="chain" id="PRO_1000011462" description="4-hydroxy-3-methylbut-2-en-1-yl diphosphate synthase (flavodoxin)">
    <location>
        <begin position="1"/>
        <end position="372"/>
    </location>
</feature>
<feature type="binding site" evidence="1">
    <location>
        <position position="270"/>
    </location>
    <ligand>
        <name>[4Fe-4S] cluster</name>
        <dbReference type="ChEBI" id="CHEBI:49883"/>
    </ligand>
</feature>
<feature type="binding site" evidence="1">
    <location>
        <position position="273"/>
    </location>
    <ligand>
        <name>[4Fe-4S] cluster</name>
        <dbReference type="ChEBI" id="CHEBI:49883"/>
    </ligand>
</feature>
<feature type="binding site" evidence="1">
    <location>
        <position position="305"/>
    </location>
    <ligand>
        <name>[4Fe-4S] cluster</name>
        <dbReference type="ChEBI" id="CHEBI:49883"/>
    </ligand>
</feature>
<feature type="binding site" evidence="1">
    <location>
        <position position="312"/>
    </location>
    <ligand>
        <name>[4Fe-4S] cluster</name>
        <dbReference type="ChEBI" id="CHEBI:49883"/>
    </ligand>
</feature>
<evidence type="ECO:0000255" key="1">
    <source>
        <dbReference type="HAMAP-Rule" id="MF_00159"/>
    </source>
</evidence>
<keyword id="KW-0004">4Fe-4S</keyword>
<keyword id="KW-0408">Iron</keyword>
<keyword id="KW-0411">Iron-sulfur</keyword>
<keyword id="KW-0414">Isoprene biosynthesis</keyword>
<keyword id="KW-0479">Metal-binding</keyword>
<keyword id="KW-0560">Oxidoreductase</keyword>
<proteinExistence type="inferred from homology"/>
<comment type="function">
    <text evidence="1">Converts 2C-methyl-D-erythritol 2,4-cyclodiphosphate (ME-2,4cPP) into 1-hydroxy-2-methyl-2-(E)-butenyl 4-diphosphate.</text>
</comment>
<comment type="catalytic activity">
    <reaction evidence="1">
        <text>(2E)-4-hydroxy-3-methylbut-2-enyl diphosphate + oxidized [flavodoxin] + H2O + 2 H(+) = 2-C-methyl-D-erythritol 2,4-cyclic diphosphate + reduced [flavodoxin]</text>
        <dbReference type="Rhea" id="RHEA:43604"/>
        <dbReference type="Rhea" id="RHEA-COMP:10622"/>
        <dbReference type="Rhea" id="RHEA-COMP:10623"/>
        <dbReference type="ChEBI" id="CHEBI:15377"/>
        <dbReference type="ChEBI" id="CHEBI:15378"/>
        <dbReference type="ChEBI" id="CHEBI:57618"/>
        <dbReference type="ChEBI" id="CHEBI:58210"/>
        <dbReference type="ChEBI" id="CHEBI:58483"/>
        <dbReference type="ChEBI" id="CHEBI:128753"/>
        <dbReference type="EC" id="1.17.7.3"/>
    </reaction>
</comment>
<comment type="cofactor">
    <cofactor evidence="1">
        <name>[4Fe-4S] cluster</name>
        <dbReference type="ChEBI" id="CHEBI:49883"/>
    </cofactor>
    <text evidence="1">Binds 1 [4Fe-4S] cluster.</text>
</comment>
<comment type="pathway">
    <text evidence="1">Isoprenoid biosynthesis; isopentenyl diphosphate biosynthesis via DXP pathway; isopentenyl diphosphate from 1-deoxy-D-xylulose 5-phosphate: step 5/6.</text>
</comment>
<comment type="similarity">
    <text evidence="1">Belongs to the IspG family.</text>
</comment>
<gene>
    <name evidence="1" type="primary">ispG</name>
    <name type="ordered locus">ECP_2520</name>
</gene>
<protein>
    <recommendedName>
        <fullName evidence="1">4-hydroxy-3-methylbut-2-en-1-yl diphosphate synthase (flavodoxin)</fullName>
        <ecNumber evidence="1">1.17.7.3</ecNumber>
    </recommendedName>
    <alternativeName>
        <fullName evidence="1">1-hydroxy-2-methyl-2-(E)-butenyl 4-diphosphate synthase</fullName>
    </alternativeName>
</protein>
<sequence length="372" mass="40684">MHNQAPIQRRKSTRIYVGNVPIGDGAPIAVQSMTNTRTTDVEATVNQIKALERVGADIVRVSVPTMDAAEAFKLIKQQVNVPLVADIHFDYRIALKVAEYGVDCLRINPGNIGNEERIRMVVDCARDKNIPIRIGVNAGSLEKDLQEKYGEPTPQALLESAMRHVDHLDRLNFDQFKVSVKASDVFLAVESYRLLAKQIDQPLHLGITEAGGARSGAVKSAIGLGLLLSEGIGDTLRVSLAADPVEEIKVGFDILKSLRIRSRGINFIACPTCSRQEFDVIGTVNALEQRLEDIITPMDVSIIGCVVNGPGEALVSTLGVTGGNKKSGLYEDGVRKDRLDNNDMIDQLEARIRAKASQLDEARRIDVQQVEK</sequence>
<accession>Q0TEX0</accession>
<organism>
    <name type="scientific">Escherichia coli O6:K15:H31 (strain 536 / UPEC)</name>
    <dbReference type="NCBI Taxonomy" id="362663"/>
    <lineage>
        <taxon>Bacteria</taxon>
        <taxon>Pseudomonadati</taxon>
        <taxon>Pseudomonadota</taxon>
        <taxon>Gammaproteobacteria</taxon>
        <taxon>Enterobacterales</taxon>
        <taxon>Enterobacteriaceae</taxon>
        <taxon>Escherichia</taxon>
    </lineage>
</organism>